<dbReference type="EC" id="2.1.3.3"/>
<dbReference type="EMBL" id="X64203">
    <property type="protein sequence ID" value="CAA45530.1"/>
    <property type="molecule type" value="Genomic_DNA"/>
</dbReference>
<dbReference type="EMBL" id="LT708304">
    <property type="protein sequence ID" value="SIU00287.1"/>
    <property type="molecule type" value="Genomic_DNA"/>
</dbReference>
<dbReference type="PIR" id="S26215">
    <property type="entry name" value="S26215"/>
</dbReference>
<dbReference type="RefSeq" id="NP_855336.1">
    <property type="nucleotide sequence ID" value="NC_002945.3"/>
</dbReference>
<dbReference type="RefSeq" id="WP_003408165.1">
    <property type="nucleotide sequence ID" value="NC_002945.4"/>
</dbReference>
<dbReference type="SMR" id="P0A5M9"/>
<dbReference type="KEGG" id="mbo:BQ2027_MB1684"/>
<dbReference type="PATRIC" id="fig|233413.5.peg.1837"/>
<dbReference type="BRENDA" id="2.1.3.3">
    <property type="organism ID" value="3494"/>
</dbReference>
<dbReference type="UniPathway" id="UPA00068">
    <property type="reaction ID" value="UER00112"/>
</dbReference>
<dbReference type="Proteomes" id="UP000001419">
    <property type="component" value="Chromosome"/>
</dbReference>
<dbReference type="GO" id="GO:0005737">
    <property type="term" value="C:cytoplasm"/>
    <property type="evidence" value="ECO:0007669"/>
    <property type="project" value="UniProtKB-SubCell"/>
</dbReference>
<dbReference type="GO" id="GO:0016597">
    <property type="term" value="F:amino acid binding"/>
    <property type="evidence" value="ECO:0007669"/>
    <property type="project" value="InterPro"/>
</dbReference>
<dbReference type="GO" id="GO:0004585">
    <property type="term" value="F:ornithine carbamoyltransferase activity"/>
    <property type="evidence" value="ECO:0007669"/>
    <property type="project" value="UniProtKB-UniRule"/>
</dbReference>
<dbReference type="GO" id="GO:0042450">
    <property type="term" value="P:arginine biosynthetic process via ornithine"/>
    <property type="evidence" value="ECO:0007669"/>
    <property type="project" value="TreeGrafter"/>
</dbReference>
<dbReference type="GO" id="GO:0019240">
    <property type="term" value="P:citrulline biosynthetic process"/>
    <property type="evidence" value="ECO:0007669"/>
    <property type="project" value="TreeGrafter"/>
</dbReference>
<dbReference type="GO" id="GO:0006526">
    <property type="term" value="P:L-arginine biosynthetic process"/>
    <property type="evidence" value="ECO:0007669"/>
    <property type="project" value="UniProtKB-UniRule"/>
</dbReference>
<dbReference type="FunFam" id="3.40.50.1370:FF:000008">
    <property type="entry name" value="Ornithine carbamoyltransferase"/>
    <property type="match status" value="1"/>
</dbReference>
<dbReference type="Gene3D" id="3.40.50.1370">
    <property type="entry name" value="Aspartate/ornithine carbamoyltransferase"/>
    <property type="match status" value="2"/>
</dbReference>
<dbReference type="HAMAP" id="MF_01109">
    <property type="entry name" value="OTCase"/>
    <property type="match status" value="1"/>
</dbReference>
<dbReference type="InterPro" id="IPR006132">
    <property type="entry name" value="Asp/Orn_carbamoyltranf_P-bd"/>
</dbReference>
<dbReference type="InterPro" id="IPR006130">
    <property type="entry name" value="Asp/Orn_carbamoylTrfase"/>
</dbReference>
<dbReference type="InterPro" id="IPR036901">
    <property type="entry name" value="Asp/Orn_carbamoylTrfase_sf"/>
</dbReference>
<dbReference type="InterPro" id="IPR006131">
    <property type="entry name" value="Asp_carbamoyltransf_Asp/Orn-bd"/>
</dbReference>
<dbReference type="InterPro" id="IPR002292">
    <property type="entry name" value="Orn/put_carbamltrans"/>
</dbReference>
<dbReference type="InterPro" id="IPR024904">
    <property type="entry name" value="OTCase_ArgI"/>
</dbReference>
<dbReference type="NCBIfam" id="TIGR00658">
    <property type="entry name" value="orni_carb_tr"/>
    <property type="match status" value="1"/>
</dbReference>
<dbReference type="NCBIfam" id="NF001986">
    <property type="entry name" value="PRK00779.1"/>
    <property type="match status" value="1"/>
</dbReference>
<dbReference type="PANTHER" id="PTHR45753">
    <property type="entry name" value="ORNITHINE CARBAMOYLTRANSFERASE, MITOCHONDRIAL"/>
    <property type="match status" value="1"/>
</dbReference>
<dbReference type="PANTHER" id="PTHR45753:SF3">
    <property type="entry name" value="ORNITHINE TRANSCARBAMYLASE, MITOCHONDRIAL"/>
    <property type="match status" value="1"/>
</dbReference>
<dbReference type="Pfam" id="PF00185">
    <property type="entry name" value="OTCace"/>
    <property type="match status" value="1"/>
</dbReference>
<dbReference type="Pfam" id="PF02729">
    <property type="entry name" value="OTCace_N"/>
    <property type="match status" value="1"/>
</dbReference>
<dbReference type="PRINTS" id="PR00100">
    <property type="entry name" value="AOTCASE"/>
</dbReference>
<dbReference type="PRINTS" id="PR00102">
    <property type="entry name" value="OTCASE"/>
</dbReference>
<dbReference type="SUPFAM" id="SSF53671">
    <property type="entry name" value="Aspartate/ornithine carbamoyltransferase"/>
    <property type="match status" value="1"/>
</dbReference>
<dbReference type="PROSITE" id="PS00097">
    <property type="entry name" value="CARBAMOYLTRANSFERASE"/>
    <property type="match status" value="1"/>
</dbReference>
<feature type="chain" id="PRO_0000112956" description="Ornithine carbamoyltransferase">
    <location>
        <begin position="1"/>
        <end position="307"/>
    </location>
</feature>
<feature type="binding site" evidence="2">
    <location>
        <begin position="50"/>
        <end position="53"/>
    </location>
    <ligand>
        <name>carbamoyl phosphate</name>
        <dbReference type="ChEBI" id="CHEBI:58228"/>
    </ligand>
</feature>
<feature type="binding site" evidence="2">
    <location>
        <position position="77"/>
    </location>
    <ligand>
        <name>carbamoyl phosphate</name>
        <dbReference type="ChEBI" id="CHEBI:58228"/>
    </ligand>
</feature>
<feature type="binding site" evidence="2">
    <location>
        <position position="101"/>
    </location>
    <ligand>
        <name>carbamoyl phosphate</name>
        <dbReference type="ChEBI" id="CHEBI:58228"/>
    </ligand>
</feature>
<feature type="binding site" evidence="2">
    <location>
        <begin position="128"/>
        <end position="131"/>
    </location>
    <ligand>
        <name>carbamoyl phosphate</name>
        <dbReference type="ChEBI" id="CHEBI:58228"/>
    </ligand>
</feature>
<feature type="binding site" evidence="2">
    <location>
        <position position="160"/>
    </location>
    <ligand>
        <name>L-ornithine</name>
        <dbReference type="ChEBI" id="CHEBI:46911"/>
    </ligand>
</feature>
<feature type="binding site" evidence="2">
    <location>
        <position position="224"/>
    </location>
    <ligand>
        <name>L-ornithine</name>
        <dbReference type="ChEBI" id="CHEBI:46911"/>
    </ligand>
</feature>
<feature type="binding site" evidence="2">
    <location>
        <begin position="228"/>
        <end position="229"/>
    </location>
    <ligand>
        <name>L-ornithine</name>
        <dbReference type="ChEBI" id="CHEBI:46911"/>
    </ligand>
</feature>
<feature type="binding site" evidence="2">
    <location>
        <begin position="264"/>
        <end position="265"/>
    </location>
    <ligand>
        <name>carbamoyl phosphate</name>
        <dbReference type="ChEBI" id="CHEBI:58228"/>
    </ligand>
</feature>
<feature type="binding site" evidence="2">
    <location>
        <position position="292"/>
    </location>
    <ligand>
        <name>carbamoyl phosphate</name>
        <dbReference type="ChEBI" id="CHEBI:58228"/>
    </ligand>
</feature>
<feature type="sequence conflict" description="In Ref. 1; CAA45530." evidence="4" ref="1">
    <original>G</original>
    <variation>A</variation>
    <location>
        <position position="217"/>
    </location>
</feature>
<feature type="sequence conflict" description="In Ref. 1; CAA45530." evidence="4" ref="1">
    <original>L</original>
    <variation>V</variation>
    <location>
        <position position="299"/>
    </location>
</feature>
<protein>
    <recommendedName>
        <fullName>Ornithine carbamoyltransferase</fullName>
        <shortName>OTCase</shortName>
        <ecNumber>2.1.3.3</ecNumber>
    </recommendedName>
</protein>
<sequence>MIRHFLRDDDLSPAEQAEVLELAAELKKDPVSRRPLQGPRGVAVIFDKNSTRTRFSFELGIAQLGGHAVVVDSGSTQLGRDETLQDTAKVLSRYVDAIVWRTFGQERLDAMASVATVPVINALSDEFHPCQVLADLQTIAERKGALRGLRLSYFGDGANNMAHSLLLGGVTAGIHVTVAAPEGFLPDPSVRAAAERRAQDTGASVTVTADAHAAAAGADVLVTDTWTSMGQENDGLDRVKPFRPFQLNSRLLALADSDAIVLHCLPAHRGDEITDAVMDGPASAVWDEAENRLHAQKALLVWLLERS</sequence>
<comment type="function">
    <text evidence="1">Reversibly catalyzes the transfer of the carbamoyl group from carbamoyl phosphate (CP) to the N(epsilon) atom of ornithine (ORN) to produce L-citrulline, which is a substrate for argininosuccinate synthetase, the enzyme involved in the final step in arginine biosynthesis.</text>
</comment>
<comment type="catalytic activity">
    <reaction>
        <text>carbamoyl phosphate + L-ornithine = L-citrulline + phosphate + H(+)</text>
        <dbReference type="Rhea" id="RHEA:19513"/>
        <dbReference type="ChEBI" id="CHEBI:15378"/>
        <dbReference type="ChEBI" id="CHEBI:43474"/>
        <dbReference type="ChEBI" id="CHEBI:46911"/>
        <dbReference type="ChEBI" id="CHEBI:57743"/>
        <dbReference type="ChEBI" id="CHEBI:58228"/>
        <dbReference type="EC" id="2.1.3.3"/>
    </reaction>
</comment>
<comment type="pathway">
    <text>Amino-acid biosynthesis; L-arginine biosynthesis; L-arginine from L-ornithine and carbamoyl phosphate: step 1/3.</text>
</comment>
<comment type="subunit">
    <text evidence="3">Homotrimer.</text>
</comment>
<comment type="subcellular location">
    <subcellularLocation>
        <location evidence="4">Cytoplasm</location>
    </subcellularLocation>
</comment>
<comment type="similarity">
    <text evidence="4">Belongs to the aspartate/ornithine carbamoyltransferase superfamily. OTCase family.</text>
</comment>
<accession>P0A5M9</accession>
<accession>A0A1R3XYY7</accession>
<accession>P94991</accession>
<accession>Q02095</accession>
<accession>X2BI29</accession>
<keyword id="KW-0028">Amino-acid biosynthesis</keyword>
<keyword id="KW-0055">Arginine biosynthesis</keyword>
<keyword id="KW-0963">Cytoplasm</keyword>
<keyword id="KW-1185">Reference proteome</keyword>
<keyword id="KW-0808">Transferase</keyword>
<reference key="1">
    <citation type="journal article" date="1992" name="Mol. Gen. Genet.">
        <title>Molecular cloning, characterization and purification of ornithine carbamoyltransferase from Mycobacterium bovis BCG.</title>
        <authorList>
            <person name="Timm J."/>
            <person name="van Rompaey I."/>
            <person name="Tricot C."/>
            <person name="Massaer M."/>
            <person name="Haeseleer F."/>
            <person name="Fauconnier A."/>
            <person name="Stalon V."/>
            <person name="Bollen A."/>
            <person name="Jacobs P."/>
        </authorList>
    </citation>
    <scope>NUCLEOTIDE SEQUENCE [GENOMIC DNA]</scope>
    <scope>SUBUNIT</scope>
    <source>
        <strain>BCG</strain>
    </source>
</reference>
<reference key="2">
    <citation type="journal article" date="2003" name="Proc. Natl. Acad. Sci. U.S.A.">
        <title>The complete genome sequence of Mycobacterium bovis.</title>
        <authorList>
            <person name="Garnier T."/>
            <person name="Eiglmeier K."/>
            <person name="Camus J.-C."/>
            <person name="Medina N."/>
            <person name="Mansoor H."/>
            <person name="Pryor M."/>
            <person name="Duthoy S."/>
            <person name="Grondin S."/>
            <person name="Lacroix C."/>
            <person name="Monsempe C."/>
            <person name="Simon S."/>
            <person name="Harris B."/>
            <person name="Atkin R."/>
            <person name="Doggett J."/>
            <person name="Mayes R."/>
            <person name="Keating L."/>
            <person name="Wheeler P.R."/>
            <person name="Parkhill J."/>
            <person name="Barrell B.G."/>
            <person name="Cole S.T."/>
            <person name="Gordon S.V."/>
            <person name="Hewinson R.G."/>
        </authorList>
    </citation>
    <scope>NUCLEOTIDE SEQUENCE [LARGE SCALE GENOMIC DNA]</scope>
    <source>
        <strain>ATCC BAA-935 / AF2122/97</strain>
    </source>
</reference>
<reference key="3">
    <citation type="journal article" date="2017" name="Genome Announc.">
        <title>Updated reference genome sequence and annotation of Mycobacterium bovis AF2122/97.</title>
        <authorList>
            <person name="Malone K.M."/>
            <person name="Farrell D."/>
            <person name="Stuber T.P."/>
            <person name="Schubert O.T."/>
            <person name="Aebersold R."/>
            <person name="Robbe-Austerman S."/>
            <person name="Gordon S.V."/>
        </authorList>
    </citation>
    <scope>NUCLEOTIDE SEQUENCE [LARGE SCALE GENOMIC DNA]</scope>
    <scope>GENOME REANNOTATION</scope>
    <source>
        <strain>ATCC BAA-935 / AF2122/97</strain>
    </source>
</reference>
<organism>
    <name type="scientific">Mycobacterium bovis (strain ATCC BAA-935 / AF2122/97)</name>
    <dbReference type="NCBI Taxonomy" id="233413"/>
    <lineage>
        <taxon>Bacteria</taxon>
        <taxon>Bacillati</taxon>
        <taxon>Actinomycetota</taxon>
        <taxon>Actinomycetes</taxon>
        <taxon>Mycobacteriales</taxon>
        <taxon>Mycobacteriaceae</taxon>
        <taxon>Mycobacterium</taxon>
        <taxon>Mycobacterium tuberculosis complex</taxon>
    </lineage>
</organism>
<evidence type="ECO:0000250" key="1"/>
<evidence type="ECO:0000255" key="2">
    <source>
        <dbReference type="HAMAP-Rule" id="MF_01109"/>
    </source>
</evidence>
<evidence type="ECO:0000269" key="3">
    <source>
    </source>
</evidence>
<evidence type="ECO:0000305" key="4"/>
<gene>
    <name type="primary">argF</name>
    <name type="ordered locus">BQ2027_MB1684</name>
</gene>
<name>OTC_MYCBO</name>
<proteinExistence type="evidence at protein level"/>